<dbReference type="EC" id="1.14.14.14" evidence="2"/>
<dbReference type="EMBL" id="AJ012144">
    <property type="protein sequence ID" value="CAB40563.1"/>
    <property type="molecule type" value="Genomic_DNA"/>
</dbReference>
<dbReference type="EMBL" id="AJ012145">
    <property type="protein sequence ID" value="CAB40563.1"/>
    <property type="status" value="JOINED"/>
    <property type="molecule type" value="Genomic_DNA"/>
</dbReference>
<dbReference type="EMBL" id="AJ012146">
    <property type="protein sequence ID" value="CAB40563.1"/>
    <property type="status" value="JOINED"/>
    <property type="molecule type" value="Genomic_DNA"/>
</dbReference>
<dbReference type="EMBL" id="AJ012147">
    <property type="protein sequence ID" value="CAB40563.1"/>
    <property type="status" value="JOINED"/>
    <property type="molecule type" value="Genomic_DNA"/>
</dbReference>
<dbReference type="EMBL" id="AJ012148">
    <property type="protein sequence ID" value="CAB40563.1"/>
    <property type="status" value="JOINED"/>
    <property type="molecule type" value="Genomic_DNA"/>
</dbReference>
<dbReference type="EMBL" id="AJ012149">
    <property type="protein sequence ID" value="CAB40563.1"/>
    <property type="status" value="JOINED"/>
    <property type="molecule type" value="Genomic_DNA"/>
</dbReference>
<dbReference type="EMBL" id="AJ012150">
    <property type="protein sequence ID" value="CAB40563.1"/>
    <property type="status" value="JOINED"/>
    <property type="molecule type" value="Genomic_DNA"/>
</dbReference>
<dbReference type="EMBL" id="AJ012151">
    <property type="protein sequence ID" value="CAB40563.1"/>
    <property type="status" value="JOINED"/>
    <property type="molecule type" value="Genomic_DNA"/>
</dbReference>
<dbReference type="EMBL" id="AJ012152">
    <property type="protein sequence ID" value="CAB40563.1"/>
    <property type="status" value="JOINED"/>
    <property type="molecule type" value="Genomic_DNA"/>
</dbReference>
<dbReference type="EMBL" id="AJ012153">
    <property type="protein sequence ID" value="CAB40543.1"/>
    <property type="molecule type" value="mRNA"/>
</dbReference>
<dbReference type="RefSeq" id="NP_001116472.1">
    <property type="nucleotide sequence ID" value="NM_001123000.1"/>
</dbReference>
<dbReference type="SMR" id="Q9XS28"/>
<dbReference type="STRING" id="9940.ENSOARP00000022542"/>
<dbReference type="PaxDb" id="9940-ENSOARP00000022542"/>
<dbReference type="Ensembl" id="ENSOART00040034361">
    <property type="protein sequence ID" value="ENSOARP00040017883"/>
    <property type="gene ID" value="ENSOARG00040020567"/>
</dbReference>
<dbReference type="Ensembl" id="ENSOART00180028749">
    <property type="protein sequence ID" value="ENSOARP00180014879"/>
    <property type="gene ID" value="ENSOARG00180017464"/>
</dbReference>
<dbReference type="Ensembl" id="ENSOART00185034381">
    <property type="protein sequence ID" value="ENSOARP00185016972"/>
    <property type="gene ID" value="ENSOARG00185020910"/>
</dbReference>
<dbReference type="Ensembl" id="ENSOART00185034390">
    <property type="protein sequence ID" value="ENSOARP00185016981"/>
    <property type="gene ID" value="ENSOARG00185020910"/>
</dbReference>
<dbReference type="Ensembl" id="ENSOART00215075809">
    <property type="protein sequence ID" value="ENSOARP00215041073"/>
    <property type="gene ID" value="ENSOARG00215044829"/>
</dbReference>
<dbReference type="Ensembl" id="ENSOART00220029675">
    <property type="protein sequence ID" value="ENSOARP00220016397"/>
    <property type="gene ID" value="ENSOARG00220017733"/>
</dbReference>
<dbReference type="Ensembl" id="ENSOART00225013117">
    <property type="protein sequence ID" value="ENSOARP00225006088"/>
    <property type="gene ID" value="ENSOARG00225008054"/>
</dbReference>
<dbReference type="GeneID" id="100144423"/>
<dbReference type="KEGG" id="oas:100144423"/>
<dbReference type="CTD" id="100144423"/>
<dbReference type="eggNOG" id="KOG0157">
    <property type="taxonomic scope" value="Eukaryota"/>
</dbReference>
<dbReference type="OrthoDB" id="1470350at2759"/>
<dbReference type="Proteomes" id="UP000002356">
    <property type="component" value="Unplaced"/>
</dbReference>
<dbReference type="GO" id="GO:0005783">
    <property type="term" value="C:endoplasmic reticulum"/>
    <property type="evidence" value="ECO:0007669"/>
    <property type="project" value="Ensembl"/>
</dbReference>
<dbReference type="GO" id="GO:0016020">
    <property type="term" value="C:membrane"/>
    <property type="evidence" value="ECO:0007669"/>
    <property type="project" value="UniProtKB-SubCell"/>
</dbReference>
<dbReference type="GO" id="GO:0070330">
    <property type="term" value="F:aromatase activity"/>
    <property type="evidence" value="ECO:0007669"/>
    <property type="project" value="UniProtKB-EC"/>
</dbReference>
<dbReference type="GO" id="GO:0020037">
    <property type="term" value="F:heme binding"/>
    <property type="evidence" value="ECO:0007669"/>
    <property type="project" value="Ensembl"/>
</dbReference>
<dbReference type="GO" id="GO:0005506">
    <property type="term" value="F:iron ion binding"/>
    <property type="evidence" value="ECO:0007669"/>
    <property type="project" value="InterPro"/>
</dbReference>
<dbReference type="GO" id="GO:0006710">
    <property type="term" value="P:androgen catabolic process"/>
    <property type="evidence" value="ECO:0007669"/>
    <property type="project" value="Ensembl"/>
</dbReference>
<dbReference type="GO" id="GO:0030540">
    <property type="term" value="P:female genitalia development"/>
    <property type="evidence" value="ECO:0007669"/>
    <property type="project" value="Ensembl"/>
</dbReference>
<dbReference type="GO" id="GO:0008585">
    <property type="term" value="P:female gonad development"/>
    <property type="evidence" value="ECO:0007669"/>
    <property type="project" value="Ensembl"/>
</dbReference>
<dbReference type="GO" id="GO:0030879">
    <property type="term" value="P:mammary gland development"/>
    <property type="evidence" value="ECO:0007669"/>
    <property type="project" value="Ensembl"/>
</dbReference>
<dbReference type="GO" id="GO:0002677">
    <property type="term" value="P:negative regulation of chronic inflammatory response"/>
    <property type="evidence" value="ECO:0007669"/>
    <property type="project" value="Ensembl"/>
</dbReference>
<dbReference type="GO" id="GO:0010760">
    <property type="term" value="P:negative regulation of macrophage chemotaxis"/>
    <property type="evidence" value="ECO:0007669"/>
    <property type="project" value="Ensembl"/>
</dbReference>
<dbReference type="GO" id="GO:2000866">
    <property type="term" value="P:positive regulation of estradiol secretion"/>
    <property type="evidence" value="ECO:0007669"/>
    <property type="project" value="Ensembl"/>
</dbReference>
<dbReference type="GO" id="GO:0060736">
    <property type="term" value="P:prostate gland growth"/>
    <property type="evidence" value="ECO:0007669"/>
    <property type="project" value="Ensembl"/>
</dbReference>
<dbReference type="GO" id="GO:0032355">
    <property type="term" value="P:response to estradiol"/>
    <property type="evidence" value="ECO:0007669"/>
    <property type="project" value="TreeGrafter"/>
</dbReference>
<dbReference type="GO" id="GO:0061370">
    <property type="term" value="P:testosterone biosynthetic process"/>
    <property type="evidence" value="ECO:0007669"/>
    <property type="project" value="Ensembl"/>
</dbReference>
<dbReference type="GO" id="GO:0060065">
    <property type="term" value="P:uterus development"/>
    <property type="evidence" value="ECO:0007669"/>
    <property type="project" value="Ensembl"/>
</dbReference>
<dbReference type="CDD" id="cd20616">
    <property type="entry name" value="CYP19A1"/>
    <property type="match status" value="1"/>
</dbReference>
<dbReference type="FunFam" id="1.10.630.10:FF:000032">
    <property type="entry name" value="Cytochrome P450 aromatase"/>
    <property type="match status" value="1"/>
</dbReference>
<dbReference type="Gene3D" id="1.10.630.10">
    <property type="entry name" value="Cytochrome P450"/>
    <property type="match status" value="1"/>
</dbReference>
<dbReference type="InterPro" id="IPR001128">
    <property type="entry name" value="Cyt_P450"/>
</dbReference>
<dbReference type="InterPro" id="IPR017972">
    <property type="entry name" value="Cyt_P450_CS"/>
</dbReference>
<dbReference type="InterPro" id="IPR002401">
    <property type="entry name" value="Cyt_P450_E_grp-I"/>
</dbReference>
<dbReference type="InterPro" id="IPR036396">
    <property type="entry name" value="Cyt_P450_sf"/>
</dbReference>
<dbReference type="InterPro" id="IPR050196">
    <property type="entry name" value="Cytochrome_P450_Monoox"/>
</dbReference>
<dbReference type="PANTHER" id="PTHR24291:SF43">
    <property type="entry name" value="AROMATASE"/>
    <property type="match status" value="1"/>
</dbReference>
<dbReference type="PANTHER" id="PTHR24291">
    <property type="entry name" value="CYTOCHROME P450 FAMILY 4"/>
    <property type="match status" value="1"/>
</dbReference>
<dbReference type="Pfam" id="PF00067">
    <property type="entry name" value="p450"/>
    <property type="match status" value="1"/>
</dbReference>
<dbReference type="PRINTS" id="PR00463">
    <property type="entry name" value="EP450I"/>
</dbReference>
<dbReference type="PRINTS" id="PR00385">
    <property type="entry name" value="P450"/>
</dbReference>
<dbReference type="SUPFAM" id="SSF48264">
    <property type="entry name" value="Cytochrome P450"/>
    <property type="match status" value="1"/>
</dbReference>
<dbReference type="PROSITE" id="PS00086">
    <property type="entry name" value="CYTOCHROME_P450"/>
    <property type="match status" value="1"/>
</dbReference>
<reference key="1">
    <citation type="journal article" date="2001" name="J. Steroid Biochem. Mol. Biol.">
        <title>Expression of the aromatase cytochrome P450 encoding gene in cattle and sheep.</title>
        <authorList>
            <person name="Vanselow J."/>
            <person name="Furbass R."/>
            <person name="Zsolnai A."/>
            <person name="Kalbe C."/>
            <person name="Said H.M."/>
            <person name="Schwerin M."/>
        </authorList>
    </citation>
    <scope>NUCLEOTIDE SEQUENCE [GENOMIC DNA / MRNA]</scope>
</reference>
<evidence type="ECO:0000250" key="1"/>
<evidence type="ECO:0000250" key="2">
    <source>
        <dbReference type="UniProtKB" id="P11511"/>
    </source>
</evidence>
<evidence type="ECO:0000305" key="3"/>
<sequence length="503" mass="57970">MLLEVLNPRHYNVTSMVSEVVPIASIAILLLTGFLLLVWNYEDTSSIPGPSYFLGIGPLISHCRFLWMGIGSACNYYNKMYGEFMRVWVCGEETLIISKSSSMFHVMKHSHYISRFGSKLGLQFIGMHEKGIIFNNNPALWKAVRPFFTKALSGPGLVRMVTICADSITKHLDRLEEVCNDLGYVDVLTLMRRIMLDTSNILFLGIPLDESAIVVKIQGYFDAWQALLLKPDIFFKISWLCRKYEKSVKDLKDAMEILIEEKRHRISTAEKLEDCIDFATELIFAEKRGELTKENVNQCILEMLIAAPDTMSVSVFFMLFLIAKHPQVEEAMMREIQTVVGERDIRIDDMQKLKVVENFINESMRYQPVVDLVMRKALEDDVIDGYPVKKGTNIILNLGRMHRLEFFPKPNEFTLENFAKNVPYRYFQPFGFGPRACAGKYIAMVMMKVILVTLLRRFHVQTLQGRCVEKMQKKNDLSLHPDETSDRLEMIFIPRNSDKCLEC</sequence>
<accession>Q9XS28</accession>
<gene>
    <name type="primary">CYP19A1</name>
    <name type="synonym">CYP19</name>
</gene>
<feature type="chain" id="PRO_0000051963" description="Aromatase">
    <location>
        <begin position="1"/>
        <end position="503"/>
    </location>
</feature>
<feature type="binding site" description="axial binding residue" evidence="1">
    <location>
        <position position="437"/>
    </location>
    <ligand>
        <name>heme</name>
        <dbReference type="ChEBI" id="CHEBI:30413"/>
    </ligand>
    <ligandPart>
        <name>Fe</name>
        <dbReference type="ChEBI" id="CHEBI:18248"/>
    </ligandPart>
</feature>
<keyword id="KW-0349">Heme</keyword>
<keyword id="KW-0408">Iron</keyword>
<keyword id="KW-0443">Lipid metabolism</keyword>
<keyword id="KW-0472">Membrane</keyword>
<keyword id="KW-0479">Metal-binding</keyword>
<keyword id="KW-0503">Monooxygenase</keyword>
<keyword id="KW-0560">Oxidoreductase</keyword>
<keyword id="KW-1185">Reference proteome</keyword>
<name>CP19A_SHEEP</name>
<proteinExistence type="evidence at transcript level"/>
<comment type="function">
    <text>Catalyzes the formation of aromatic C18 estrogens from C19 androgens.</text>
</comment>
<comment type="catalytic activity">
    <reaction evidence="2">
        <text>testosterone + 3 reduced [NADPH--hemoprotein reductase] + 3 O2 = 17beta-estradiol + formate + 3 oxidized [NADPH--hemoprotein reductase] + 4 H2O + 4 H(+)</text>
        <dbReference type="Rhea" id="RHEA:38191"/>
        <dbReference type="Rhea" id="RHEA-COMP:11964"/>
        <dbReference type="Rhea" id="RHEA-COMP:11965"/>
        <dbReference type="ChEBI" id="CHEBI:15377"/>
        <dbReference type="ChEBI" id="CHEBI:15378"/>
        <dbReference type="ChEBI" id="CHEBI:15379"/>
        <dbReference type="ChEBI" id="CHEBI:15740"/>
        <dbReference type="ChEBI" id="CHEBI:16469"/>
        <dbReference type="ChEBI" id="CHEBI:17347"/>
        <dbReference type="ChEBI" id="CHEBI:57618"/>
        <dbReference type="ChEBI" id="CHEBI:58210"/>
        <dbReference type="EC" id="1.14.14.14"/>
    </reaction>
</comment>
<comment type="catalytic activity">
    <reaction evidence="2">
        <text>androst-4-ene-3,17-dione + 3 reduced [NADPH--hemoprotein reductase] + 3 O2 = estrone + formate + 3 oxidized [NADPH--hemoprotein reductase] + 4 H2O + 4 H(+)</text>
        <dbReference type="Rhea" id="RHEA:38195"/>
        <dbReference type="Rhea" id="RHEA-COMP:11964"/>
        <dbReference type="Rhea" id="RHEA-COMP:11965"/>
        <dbReference type="ChEBI" id="CHEBI:15377"/>
        <dbReference type="ChEBI" id="CHEBI:15378"/>
        <dbReference type="ChEBI" id="CHEBI:15379"/>
        <dbReference type="ChEBI" id="CHEBI:15740"/>
        <dbReference type="ChEBI" id="CHEBI:16422"/>
        <dbReference type="ChEBI" id="CHEBI:17263"/>
        <dbReference type="ChEBI" id="CHEBI:57618"/>
        <dbReference type="ChEBI" id="CHEBI:58210"/>
        <dbReference type="EC" id="1.14.14.14"/>
    </reaction>
</comment>
<comment type="cofactor">
    <cofactor evidence="1">
        <name>heme</name>
        <dbReference type="ChEBI" id="CHEBI:30413"/>
    </cofactor>
</comment>
<comment type="subcellular location">
    <subcellularLocation>
        <location>Membrane</location>
        <topology>Peripheral membrane protein</topology>
    </subcellularLocation>
</comment>
<comment type="similarity">
    <text evidence="3">Belongs to the cytochrome P450 family.</text>
</comment>
<organism>
    <name type="scientific">Ovis aries</name>
    <name type="common">Sheep</name>
    <dbReference type="NCBI Taxonomy" id="9940"/>
    <lineage>
        <taxon>Eukaryota</taxon>
        <taxon>Metazoa</taxon>
        <taxon>Chordata</taxon>
        <taxon>Craniata</taxon>
        <taxon>Vertebrata</taxon>
        <taxon>Euteleostomi</taxon>
        <taxon>Mammalia</taxon>
        <taxon>Eutheria</taxon>
        <taxon>Laurasiatheria</taxon>
        <taxon>Artiodactyla</taxon>
        <taxon>Ruminantia</taxon>
        <taxon>Pecora</taxon>
        <taxon>Bovidae</taxon>
        <taxon>Caprinae</taxon>
        <taxon>Ovis</taxon>
    </lineage>
</organism>
<protein>
    <recommendedName>
        <fullName>Aromatase</fullName>
        <ecNumber evidence="2">1.14.14.14</ecNumber>
    </recommendedName>
    <alternativeName>
        <fullName>CYPXIX</fullName>
    </alternativeName>
    <alternativeName>
        <fullName>Cytochrome P-450AROM</fullName>
    </alternativeName>
    <alternativeName>
        <fullName>Cytochrome P450 19A1</fullName>
    </alternativeName>
    <alternativeName>
        <fullName>Estrogen synthase</fullName>
    </alternativeName>
</protein>